<comment type="function">
    <text evidence="1">Catalyzes the NAD-dependent reduction of succinylglutamate semialdehyde into succinylglutamate.</text>
</comment>
<comment type="catalytic activity">
    <reaction evidence="1">
        <text>N-succinyl-L-glutamate 5-semialdehyde + NAD(+) + H2O = N-succinyl-L-glutamate + NADH + 2 H(+)</text>
        <dbReference type="Rhea" id="RHEA:10812"/>
        <dbReference type="ChEBI" id="CHEBI:15377"/>
        <dbReference type="ChEBI" id="CHEBI:15378"/>
        <dbReference type="ChEBI" id="CHEBI:57540"/>
        <dbReference type="ChEBI" id="CHEBI:57945"/>
        <dbReference type="ChEBI" id="CHEBI:58520"/>
        <dbReference type="ChEBI" id="CHEBI:58763"/>
        <dbReference type="EC" id="1.2.1.71"/>
    </reaction>
</comment>
<comment type="pathway">
    <text evidence="1">Amino-acid degradation; L-arginine degradation via AST pathway; L-glutamate and succinate from L-arginine: step 4/5.</text>
</comment>
<comment type="similarity">
    <text evidence="1">Belongs to the aldehyde dehydrogenase family. AstD subfamily.</text>
</comment>
<protein>
    <recommendedName>
        <fullName evidence="1">N-succinylglutamate 5-semialdehyde dehydrogenase</fullName>
        <ecNumber evidence="1">1.2.1.71</ecNumber>
    </recommendedName>
    <alternativeName>
        <fullName evidence="1">Succinylglutamic semialdehyde dehydrogenase</fullName>
        <shortName evidence="1">SGSD</shortName>
    </alternativeName>
</protein>
<feature type="chain" id="PRO_1000065748" description="N-succinylglutamate 5-semialdehyde dehydrogenase">
    <location>
        <begin position="1"/>
        <end position="487"/>
    </location>
</feature>
<feature type="active site" evidence="1">
    <location>
        <position position="244"/>
    </location>
</feature>
<feature type="active site" evidence="1">
    <location>
        <position position="278"/>
    </location>
</feature>
<feature type="binding site" evidence="1">
    <location>
        <begin position="221"/>
        <end position="226"/>
    </location>
    <ligand>
        <name>NAD(+)</name>
        <dbReference type="ChEBI" id="CHEBI:57540"/>
    </ligand>
</feature>
<organism>
    <name type="scientific">Burkholderia ambifaria (strain ATCC BAA-244 / DSM 16087 / CCUG 44356 / LMG 19182 / AMMD)</name>
    <name type="common">Burkholderia cepacia (strain AMMD)</name>
    <dbReference type="NCBI Taxonomy" id="339670"/>
    <lineage>
        <taxon>Bacteria</taxon>
        <taxon>Pseudomonadati</taxon>
        <taxon>Pseudomonadota</taxon>
        <taxon>Betaproteobacteria</taxon>
        <taxon>Burkholderiales</taxon>
        <taxon>Burkholderiaceae</taxon>
        <taxon>Burkholderia</taxon>
        <taxon>Burkholderia cepacia complex</taxon>
    </lineage>
</organism>
<proteinExistence type="inferred from homology"/>
<keyword id="KW-0056">Arginine metabolism</keyword>
<keyword id="KW-0520">NAD</keyword>
<keyword id="KW-0560">Oxidoreductase</keyword>
<accession>Q0BGV0</accession>
<dbReference type="EC" id="1.2.1.71" evidence="1"/>
<dbReference type="EMBL" id="CP000440">
    <property type="protein sequence ID" value="ABI86623.1"/>
    <property type="molecule type" value="Genomic_DNA"/>
</dbReference>
<dbReference type="RefSeq" id="WP_011656401.1">
    <property type="nucleotide sequence ID" value="NC_008390.1"/>
</dbReference>
<dbReference type="SMR" id="Q0BGV0"/>
<dbReference type="GeneID" id="93083528"/>
<dbReference type="KEGG" id="bam:Bamb_1064"/>
<dbReference type="PATRIC" id="fig|339670.21.peg.504"/>
<dbReference type="eggNOG" id="COG1012">
    <property type="taxonomic scope" value="Bacteria"/>
</dbReference>
<dbReference type="UniPathway" id="UPA00185">
    <property type="reaction ID" value="UER00282"/>
</dbReference>
<dbReference type="Proteomes" id="UP000000662">
    <property type="component" value="Chromosome 1"/>
</dbReference>
<dbReference type="GO" id="GO:0043824">
    <property type="term" value="F:succinylglutamate-semialdehyde dehydrogenase activity"/>
    <property type="evidence" value="ECO:0007669"/>
    <property type="project" value="UniProtKB-EC"/>
</dbReference>
<dbReference type="GO" id="GO:0019544">
    <property type="term" value="P:arginine catabolic process to glutamate"/>
    <property type="evidence" value="ECO:0007669"/>
    <property type="project" value="UniProtKB-UniRule"/>
</dbReference>
<dbReference type="GO" id="GO:0019545">
    <property type="term" value="P:arginine catabolic process to succinate"/>
    <property type="evidence" value="ECO:0007669"/>
    <property type="project" value="UniProtKB-UniRule"/>
</dbReference>
<dbReference type="CDD" id="cd07095">
    <property type="entry name" value="ALDH_SGSD_AstD"/>
    <property type="match status" value="1"/>
</dbReference>
<dbReference type="FunFam" id="3.40.605.10:FF:000010">
    <property type="entry name" value="N-succinylglutamate 5-semialdehyde dehydrogenase"/>
    <property type="match status" value="1"/>
</dbReference>
<dbReference type="Gene3D" id="3.40.605.10">
    <property type="entry name" value="Aldehyde Dehydrogenase, Chain A, domain 1"/>
    <property type="match status" value="1"/>
</dbReference>
<dbReference type="Gene3D" id="3.40.309.10">
    <property type="entry name" value="Aldehyde Dehydrogenase, Chain A, domain 2"/>
    <property type="match status" value="1"/>
</dbReference>
<dbReference type="HAMAP" id="MF_01174">
    <property type="entry name" value="Aldedh_AstD"/>
    <property type="match status" value="1"/>
</dbReference>
<dbReference type="InterPro" id="IPR016161">
    <property type="entry name" value="Ald_DH/histidinol_DH"/>
</dbReference>
<dbReference type="InterPro" id="IPR016163">
    <property type="entry name" value="Ald_DH_C"/>
</dbReference>
<dbReference type="InterPro" id="IPR016160">
    <property type="entry name" value="Ald_DH_CS_CYS"/>
</dbReference>
<dbReference type="InterPro" id="IPR029510">
    <property type="entry name" value="Ald_DH_CS_GLU"/>
</dbReference>
<dbReference type="InterPro" id="IPR016162">
    <property type="entry name" value="Ald_DH_N"/>
</dbReference>
<dbReference type="InterPro" id="IPR015590">
    <property type="entry name" value="Aldehyde_DH_dom"/>
</dbReference>
<dbReference type="InterPro" id="IPR017649">
    <property type="entry name" value="SuccinylGlu_semiald_DH_AstD"/>
</dbReference>
<dbReference type="NCBIfam" id="TIGR03240">
    <property type="entry name" value="arg_catab_astD"/>
    <property type="match status" value="1"/>
</dbReference>
<dbReference type="NCBIfam" id="NF006992">
    <property type="entry name" value="PRK09457.1"/>
    <property type="match status" value="1"/>
</dbReference>
<dbReference type="PANTHER" id="PTHR11699">
    <property type="entry name" value="ALDEHYDE DEHYDROGENASE-RELATED"/>
    <property type="match status" value="1"/>
</dbReference>
<dbReference type="Pfam" id="PF00171">
    <property type="entry name" value="Aldedh"/>
    <property type="match status" value="1"/>
</dbReference>
<dbReference type="SUPFAM" id="SSF53720">
    <property type="entry name" value="ALDH-like"/>
    <property type="match status" value="1"/>
</dbReference>
<dbReference type="PROSITE" id="PS00070">
    <property type="entry name" value="ALDEHYDE_DEHYDR_CYS"/>
    <property type="match status" value="1"/>
</dbReference>
<dbReference type="PROSITE" id="PS00687">
    <property type="entry name" value="ALDEHYDE_DEHYDR_GLU"/>
    <property type="match status" value="1"/>
</dbReference>
<reference key="1">
    <citation type="submission" date="2006-08" db="EMBL/GenBank/DDBJ databases">
        <title>Complete sequence of chromosome 1 of Burkholderia cepacia AMMD.</title>
        <authorList>
            <person name="Copeland A."/>
            <person name="Lucas S."/>
            <person name="Lapidus A."/>
            <person name="Barry K."/>
            <person name="Detter J.C."/>
            <person name="Glavina del Rio T."/>
            <person name="Hammon N."/>
            <person name="Israni S."/>
            <person name="Pitluck S."/>
            <person name="Bruce D."/>
            <person name="Chain P."/>
            <person name="Malfatti S."/>
            <person name="Shin M."/>
            <person name="Vergez L."/>
            <person name="Schmutz J."/>
            <person name="Larimer F."/>
            <person name="Land M."/>
            <person name="Hauser L."/>
            <person name="Kyrpides N."/>
            <person name="Kim E."/>
            <person name="Parke J."/>
            <person name="Coenye T."/>
            <person name="Konstantinidis K."/>
            <person name="Ramette A."/>
            <person name="Tiedje J."/>
            <person name="Richardson P."/>
        </authorList>
    </citation>
    <scope>NUCLEOTIDE SEQUENCE [LARGE SCALE GENOMIC DNA]</scope>
    <source>
        <strain>ATCC BAA-244 / DSM 16087 / CCUG 44356 / LMG 19182 / AMMD</strain>
    </source>
</reference>
<sequence length="487" mass="51857">MTELFIDGAWIAGSGPAFASRNPGTDAIAWQGDSASAADVDRAVASARRAFAGWSALDFEARCEIVKRFAALLTERKEAIATAIGRETGKPLWEARTEVAAMAAKVGISIQAYQERTGEKRQDMADGVAVLRHRPHGVVAVFGPYNFPGHLPNGHIVPALIAGNTVVFKPSELAPGVARATVEVWQEAGLPAGVLNLVQGEKDTGIALANHRQIDGLFFTGSSDTGTLLHRQFGGRPEIVLALEMGGNNPLVIGEVEDLDAAVHHTIQSAFLSAGQRCTCARRIFVPQGAFGERFLARLADVTSKITADVFDADPQPFMGAVISARAAAKLVDAQSRLIEQGAKPIIEMTQRDPRLGFVNASIIDVTGVANLPDEEHFGPLAQIVRYATFDEAIERANDTAFGLSAGLLADDAHAWEHFRRTIRAGIVNWNRPTNGASSAAPFGGTGRSGNHRPSAYYAADYCAYPMASVESTQLTLPASLSPGLHF</sequence>
<evidence type="ECO:0000255" key="1">
    <source>
        <dbReference type="HAMAP-Rule" id="MF_01174"/>
    </source>
</evidence>
<name>ASTD_BURCM</name>
<gene>
    <name evidence="1" type="primary">astD</name>
    <name type="ordered locus">Bamb_1064</name>
</gene>